<keyword id="KW-0002">3D-structure</keyword>
<keyword id="KW-0249">Electron transport</keyword>
<keyword id="KW-0408">Iron</keyword>
<keyword id="KW-0479">Metal-binding</keyword>
<keyword id="KW-0560">Oxidoreductase</keyword>
<keyword id="KW-1185">Reference proteome</keyword>
<keyword id="KW-0813">Transport</keyword>
<comment type="function">
    <text evidence="1">Mediates electron transfer from NADH to oxygen, reducing it to water. This modular protein has 3 redox cofactors, in other organisms the same activity requires 2 or 3 proteins (By similarity).</text>
</comment>
<comment type="cofactor">
    <cofactor>
        <name>Fe cation</name>
        <dbReference type="ChEBI" id="CHEBI:24875"/>
    </cofactor>
    <text>Binds 2 iron ions per subunit.</text>
</comment>
<comment type="miscellaneous">
    <text evidence="1">By homology with NorV in E.coli, could be involved in nitric oxide detoxification.</text>
</comment>
<comment type="similarity">
    <text evidence="3">In the N-terminal section; belongs to the zinc metallo-hydrolase group 3 family.</text>
</comment>
<comment type="similarity">
    <text evidence="3">In the C-terminal section; belongs to the flavodoxin reductase family.</text>
</comment>
<evidence type="ECO:0000250" key="1"/>
<evidence type="ECO:0000255" key="2">
    <source>
        <dbReference type="PROSITE-ProRule" id="PRU00088"/>
    </source>
</evidence>
<evidence type="ECO:0000305" key="3"/>
<evidence type="ECO:0007829" key="4">
    <source>
        <dbReference type="PDB" id="2KLB"/>
    </source>
</evidence>
<evidence type="ECO:0007829" key="5">
    <source>
        <dbReference type="PDB" id="3FNI"/>
    </source>
</evidence>
<feature type="chain" id="PRO_0000216795" description="Putative diflavin flavoprotein A 3">
    <location>
        <begin position="1"/>
        <end position="574"/>
    </location>
</feature>
<feature type="domain" description="Flavodoxin-like" evidence="2">
    <location>
        <begin position="265"/>
        <end position="409"/>
    </location>
</feature>
<feature type="region of interest" description="Zinc metallo-hydrolase">
    <location>
        <begin position="43"/>
        <end position="236"/>
    </location>
</feature>
<feature type="region of interest" description="Flavodoxin-reductase-like">
    <location>
        <begin position="410"/>
        <end position="574"/>
    </location>
</feature>
<feature type="binding site" evidence="1">
    <location>
        <position position="92"/>
    </location>
    <ligand>
        <name>Fe cation</name>
        <dbReference type="ChEBI" id="CHEBI:24875"/>
        <label>1</label>
    </ligand>
</feature>
<feature type="binding site" evidence="1">
    <location>
        <position position="94"/>
    </location>
    <ligand>
        <name>Fe cation</name>
        <dbReference type="ChEBI" id="CHEBI:24875"/>
        <label>1</label>
    </ligand>
</feature>
<feature type="binding site" evidence="1">
    <location>
        <position position="96"/>
    </location>
    <ligand>
        <name>Fe cation</name>
        <dbReference type="ChEBI" id="CHEBI:24875"/>
        <label>2</label>
    </ligand>
</feature>
<feature type="binding site" evidence="1">
    <location>
        <position position="159"/>
    </location>
    <ligand>
        <name>Fe cation</name>
        <dbReference type="ChEBI" id="CHEBI:24875"/>
        <label>1</label>
    </ligand>
</feature>
<feature type="binding site" evidence="1">
    <location>
        <position position="178"/>
    </location>
    <ligand>
        <name>Fe cation</name>
        <dbReference type="ChEBI" id="CHEBI:24875"/>
        <label>1</label>
    </ligand>
</feature>
<feature type="binding site" evidence="1">
    <location>
        <position position="178"/>
    </location>
    <ligand>
        <name>Fe cation</name>
        <dbReference type="ChEBI" id="CHEBI:24875"/>
        <label>2</label>
    </ligand>
</feature>
<feature type="binding site" evidence="1">
    <location>
        <position position="236"/>
    </location>
    <ligand>
        <name>Fe cation</name>
        <dbReference type="ChEBI" id="CHEBI:24875"/>
        <label>2</label>
    </ligand>
</feature>
<feature type="strand" evidence="5">
    <location>
        <begin position="264"/>
        <end position="269"/>
    </location>
</feature>
<feature type="strand" evidence="4">
    <location>
        <begin position="271"/>
        <end position="273"/>
    </location>
</feature>
<feature type="helix" evidence="5">
    <location>
        <begin position="276"/>
        <end position="289"/>
    </location>
</feature>
<feature type="strand" evidence="5">
    <location>
        <begin position="293"/>
        <end position="301"/>
    </location>
</feature>
<feature type="helix" evidence="5">
    <location>
        <begin position="305"/>
        <end position="313"/>
    </location>
</feature>
<feature type="strand" evidence="5">
    <location>
        <begin position="315"/>
        <end position="321"/>
    </location>
</feature>
<feature type="helix" evidence="5">
    <location>
        <begin position="328"/>
        <end position="341"/>
    </location>
</feature>
<feature type="strand" evidence="5">
    <location>
        <begin position="346"/>
        <end position="351"/>
    </location>
</feature>
<feature type="strand" evidence="5">
    <location>
        <begin position="354"/>
        <end position="356"/>
    </location>
</feature>
<feature type="helix" evidence="5">
    <location>
        <begin position="361"/>
        <end position="370"/>
    </location>
</feature>
<feature type="strand" evidence="5">
    <location>
        <begin position="374"/>
        <end position="378"/>
    </location>
</feature>
<feature type="helix" evidence="5">
    <location>
        <begin position="388"/>
        <end position="409"/>
    </location>
</feature>
<sequence>MVALTEKTEKRLTIQTADIAQDTTAIRSLDWERDRFDIEFGLQNGTTYNSFLIRGEQIALVDTSHEKFRQLYFDTLTGLINPTEINYLIISHTEPDHSGLVKDLLQMAPEITVVGSKVAIQFLEDLVHQPFKRKIVKNGDRLDLGNGHEFEFVIAPNLHWPDTIFSFDHKTQTLYTCDAFGMHYCSDIVFDEDLKTIEPDFHYYYDCLMGPNARSVLSALKRMGELPSVKMIATGHGPLLYHNVEELTGRYRTWSQNQTKAETSIGVFYVSEYGYSDRLAQAIINGITKTGVGVDVVDLGAAVDLQELRELVGRCTGLVIGMSPAASAASIQGALSTILGSVNEKQAVGIFETGGGDDEPIDPLLSKFRNLGLTTAFPAIRIKQTPTENTYKLCEEAGTDLGQWVTRDRSIKAMKSLGADLDKALGRLSGGLYIITAKKGDVSSAMLASWVNQASFKPLGFSIAVAKDRAIESLMQVGDRFVLNVLEEGNYQPLMRHFLKRFAPGADRFEGVKTQPAENGAPILGDALAYMECEVVSRMDCGDHWAVYSTVYAGRVSKSEALTAVHHRKVGNHY</sequence>
<gene>
    <name type="primary">dfa3</name>
    <name type="ordered locus">all3895</name>
</gene>
<name>DFA3_NOSS1</name>
<proteinExistence type="evidence at protein level"/>
<accession>Q8YQD8</accession>
<organism>
    <name type="scientific">Nostoc sp. (strain PCC 7120 / SAG 25.82 / UTEX 2576)</name>
    <dbReference type="NCBI Taxonomy" id="103690"/>
    <lineage>
        <taxon>Bacteria</taxon>
        <taxon>Bacillati</taxon>
        <taxon>Cyanobacteriota</taxon>
        <taxon>Cyanophyceae</taxon>
        <taxon>Nostocales</taxon>
        <taxon>Nostocaceae</taxon>
        <taxon>Nostoc</taxon>
    </lineage>
</organism>
<reference key="1">
    <citation type="journal article" date="2001" name="DNA Res.">
        <title>Complete genomic sequence of the filamentous nitrogen-fixing cyanobacterium Anabaena sp. strain PCC 7120.</title>
        <authorList>
            <person name="Kaneko T."/>
            <person name="Nakamura Y."/>
            <person name="Wolk C.P."/>
            <person name="Kuritz T."/>
            <person name="Sasamoto S."/>
            <person name="Watanabe A."/>
            <person name="Iriguchi M."/>
            <person name="Ishikawa A."/>
            <person name="Kawashima K."/>
            <person name="Kimura T."/>
            <person name="Kishida Y."/>
            <person name="Kohara M."/>
            <person name="Matsumoto M."/>
            <person name="Matsuno A."/>
            <person name="Muraki A."/>
            <person name="Nakazaki N."/>
            <person name="Shimpo S."/>
            <person name="Sugimoto M."/>
            <person name="Takazawa M."/>
            <person name="Yamada M."/>
            <person name="Yasuda M."/>
            <person name="Tabata S."/>
        </authorList>
    </citation>
    <scope>NUCLEOTIDE SEQUENCE [LARGE SCALE GENOMIC DNA]</scope>
    <source>
        <strain>PCC 7120 / SAG 25.82 / UTEX 2576</strain>
    </source>
</reference>
<protein>
    <recommendedName>
        <fullName>Putative diflavin flavoprotein A 3</fullName>
        <ecNumber>1.-.-.-</ecNumber>
    </recommendedName>
</protein>
<dbReference type="EC" id="1.-.-.-"/>
<dbReference type="EMBL" id="BA000019">
    <property type="protein sequence ID" value="BAB75594.1"/>
    <property type="molecule type" value="Genomic_DNA"/>
</dbReference>
<dbReference type="PIR" id="AH2292">
    <property type="entry name" value="AH2292"/>
</dbReference>
<dbReference type="RefSeq" id="WP_010998036.1">
    <property type="nucleotide sequence ID" value="NZ_RSCN01000011.1"/>
</dbReference>
<dbReference type="PDB" id="2KLB">
    <property type="method" value="NMR"/>
    <property type="chains" value="A=264-409"/>
</dbReference>
<dbReference type="PDB" id="3FNI">
    <property type="method" value="X-ray"/>
    <property type="resolution" value="2.30 A"/>
    <property type="chains" value="A=259-409"/>
</dbReference>
<dbReference type="PDBsum" id="2KLB"/>
<dbReference type="PDBsum" id="3FNI"/>
<dbReference type="BMRB" id="Q8YQD8"/>
<dbReference type="SMR" id="Q8YQD8"/>
<dbReference type="STRING" id="103690.gene:10495937"/>
<dbReference type="KEGG" id="ana:all3895"/>
<dbReference type="eggNOG" id="COG0426">
    <property type="taxonomic scope" value="Bacteria"/>
</dbReference>
<dbReference type="eggNOG" id="COG1853">
    <property type="taxonomic scope" value="Bacteria"/>
</dbReference>
<dbReference type="OrthoDB" id="9807946at2"/>
<dbReference type="EvolutionaryTrace" id="Q8YQD8"/>
<dbReference type="Proteomes" id="UP000002483">
    <property type="component" value="Chromosome"/>
</dbReference>
<dbReference type="GO" id="GO:0010181">
    <property type="term" value="F:FMN binding"/>
    <property type="evidence" value="ECO:0007669"/>
    <property type="project" value="InterPro"/>
</dbReference>
<dbReference type="GO" id="GO:0046872">
    <property type="term" value="F:metal ion binding"/>
    <property type="evidence" value="ECO:0007669"/>
    <property type="project" value="UniProtKB-KW"/>
</dbReference>
<dbReference type="GO" id="GO:0016646">
    <property type="term" value="F:oxidoreductase activity, acting on the CH-NH group of donors, NAD or NADP as acceptor"/>
    <property type="evidence" value="ECO:0007669"/>
    <property type="project" value="UniProtKB-ARBA"/>
</dbReference>
<dbReference type="CDD" id="cd07709">
    <property type="entry name" value="flavodiiron_proteins_MBL-fold"/>
    <property type="match status" value="1"/>
</dbReference>
<dbReference type="Gene3D" id="3.40.50.360">
    <property type="match status" value="1"/>
</dbReference>
<dbReference type="Gene3D" id="2.30.110.10">
    <property type="entry name" value="Electron Transport, Fmn-binding Protein, Chain A"/>
    <property type="match status" value="1"/>
</dbReference>
<dbReference type="Gene3D" id="3.60.15.10">
    <property type="entry name" value="Ribonuclease Z/Hydroxyacylglutathione hydrolase-like"/>
    <property type="match status" value="1"/>
</dbReference>
<dbReference type="InterPro" id="IPR002563">
    <property type="entry name" value="Flavin_Rdtase-like_dom"/>
</dbReference>
<dbReference type="InterPro" id="IPR008254">
    <property type="entry name" value="Flavodoxin/NO_synth"/>
</dbReference>
<dbReference type="InterPro" id="IPR029039">
    <property type="entry name" value="Flavoprotein-like_sf"/>
</dbReference>
<dbReference type="InterPro" id="IPR001279">
    <property type="entry name" value="Metallo-B-lactamas"/>
</dbReference>
<dbReference type="InterPro" id="IPR051285">
    <property type="entry name" value="NADH_oxidoreductase_modular"/>
</dbReference>
<dbReference type="InterPro" id="IPR045761">
    <property type="entry name" value="ODP_dom"/>
</dbReference>
<dbReference type="InterPro" id="IPR036866">
    <property type="entry name" value="RibonucZ/Hydroxyglut_hydro"/>
</dbReference>
<dbReference type="InterPro" id="IPR012349">
    <property type="entry name" value="Split_barrel_FMN-bd"/>
</dbReference>
<dbReference type="PANTHER" id="PTHR32145">
    <property type="entry name" value="DIFLAVIN FLAVOPROTEIN A 2-RELATED"/>
    <property type="match status" value="1"/>
</dbReference>
<dbReference type="PANTHER" id="PTHR32145:SF11">
    <property type="entry name" value="DIFLAVIN FLAVOPROTEIN A 2-RELATED"/>
    <property type="match status" value="1"/>
</dbReference>
<dbReference type="Pfam" id="PF01613">
    <property type="entry name" value="Flavin_Reduct"/>
    <property type="match status" value="1"/>
</dbReference>
<dbReference type="Pfam" id="PF19583">
    <property type="entry name" value="ODP"/>
    <property type="match status" value="1"/>
</dbReference>
<dbReference type="SMART" id="SM00903">
    <property type="entry name" value="Flavin_Reduct"/>
    <property type="match status" value="1"/>
</dbReference>
<dbReference type="SMART" id="SM00849">
    <property type="entry name" value="Lactamase_B"/>
    <property type="match status" value="1"/>
</dbReference>
<dbReference type="SUPFAM" id="SSF52218">
    <property type="entry name" value="Flavoproteins"/>
    <property type="match status" value="1"/>
</dbReference>
<dbReference type="SUPFAM" id="SSF50475">
    <property type="entry name" value="FMN-binding split barrel"/>
    <property type="match status" value="1"/>
</dbReference>
<dbReference type="SUPFAM" id="SSF56281">
    <property type="entry name" value="Metallo-hydrolase/oxidoreductase"/>
    <property type="match status" value="1"/>
</dbReference>
<dbReference type="PROSITE" id="PS50902">
    <property type="entry name" value="FLAVODOXIN_LIKE"/>
    <property type="match status" value="1"/>
</dbReference>